<proteinExistence type="predicted"/>
<protein>
    <recommendedName>
        <fullName>Uncharacterized protein YaiW</fullName>
    </recommendedName>
</protein>
<accession>P77562</accession>
<accession>Q2MC47</accession>
<organism>
    <name type="scientific">Escherichia coli (strain K12)</name>
    <dbReference type="NCBI Taxonomy" id="83333"/>
    <lineage>
        <taxon>Bacteria</taxon>
        <taxon>Pseudomonadati</taxon>
        <taxon>Pseudomonadota</taxon>
        <taxon>Gammaproteobacteria</taxon>
        <taxon>Enterobacterales</taxon>
        <taxon>Enterobacteriaceae</taxon>
        <taxon>Escherichia</taxon>
    </lineage>
</organism>
<reference key="1">
    <citation type="submission" date="1997-01" db="EMBL/GenBank/DDBJ databases">
        <title>Sequence of minutes 4-25 of Escherichia coli.</title>
        <authorList>
            <person name="Chung E."/>
            <person name="Allen E."/>
            <person name="Araujo R."/>
            <person name="Aparicio A.M."/>
            <person name="Davis K."/>
            <person name="Duncan M."/>
            <person name="Federspiel N."/>
            <person name="Hyman R."/>
            <person name="Kalman S."/>
            <person name="Komp C."/>
            <person name="Kurdi O."/>
            <person name="Lew H."/>
            <person name="Lin D."/>
            <person name="Namath A."/>
            <person name="Oefner P."/>
            <person name="Roberts D."/>
            <person name="Schramm S."/>
            <person name="Davis R.W."/>
        </authorList>
    </citation>
    <scope>NUCLEOTIDE SEQUENCE [LARGE SCALE GENOMIC DNA]</scope>
    <source>
        <strain>K12 / MG1655 / ATCC 47076</strain>
    </source>
</reference>
<reference key="2">
    <citation type="journal article" date="1997" name="Science">
        <title>The complete genome sequence of Escherichia coli K-12.</title>
        <authorList>
            <person name="Blattner F.R."/>
            <person name="Plunkett G. III"/>
            <person name="Bloch C.A."/>
            <person name="Perna N.T."/>
            <person name="Burland V."/>
            <person name="Riley M."/>
            <person name="Collado-Vides J."/>
            <person name="Glasner J.D."/>
            <person name="Rode C.K."/>
            <person name="Mayhew G.F."/>
            <person name="Gregor J."/>
            <person name="Davis N.W."/>
            <person name="Kirkpatrick H.A."/>
            <person name="Goeden M.A."/>
            <person name="Rose D.J."/>
            <person name="Mau B."/>
            <person name="Shao Y."/>
        </authorList>
    </citation>
    <scope>NUCLEOTIDE SEQUENCE [LARGE SCALE GENOMIC DNA]</scope>
    <source>
        <strain>K12 / MG1655 / ATCC 47076</strain>
    </source>
</reference>
<reference key="3">
    <citation type="journal article" date="2006" name="Mol. Syst. Biol.">
        <title>Highly accurate genome sequences of Escherichia coli K-12 strains MG1655 and W3110.</title>
        <authorList>
            <person name="Hayashi K."/>
            <person name="Morooka N."/>
            <person name="Yamamoto Y."/>
            <person name="Fujita K."/>
            <person name="Isono K."/>
            <person name="Choi S."/>
            <person name="Ohtsubo E."/>
            <person name="Baba T."/>
            <person name="Wanner B.L."/>
            <person name="Mori H."/>
            <person name="Horiuchi T."/>
        </authorList>
    </citation>
    <scope>NUCLEOTIDE SEQUENCE [LARGE SCALE GENOMIC DNA]</scope>
    <source>
        <strain>K12 / W3110 / ATCC 27325 / DSM 5911</strain>
    </source>
</reference>
<feature type="chain" id="PRO_0000168598" description="Uncharacterized protein YaiW">
    <location>
        <begin position="1"/>
        <end position="364"/>
    </location>
</feature>
<gene>
    <name type="primary">yaiW</name>
    <name type="ordered locus">b0378</name>
    <name type="ordered locus">JW0369</name>
</gene>
<keyword id="KW-1185">Reference proteome</keyword>
<name>YAIW_ECOLI</name>
<dbReference type="EMBL" id="U73857">
    <property type="protein sequence ID" value="AAB18101.1"/>
    <property type="molecule type" value="Genomic_DNA"/>
</dbReference>
<dbReference type="EMBL" id="U00096">
    <property type="protein sequence ID" value="AAC73481.1"/>
    <property type="molecule type" value="Genomic_DNA"/>
</dbReference>
<dbReference type="EMBL" id="AP009048">
    <property type="protein sequence ID" value="BAE76159.1"/>
    <property type="molecule type" value="Genomic_DNA"/>
</dbReference>
<dbReference type="PIR" id="B64766">
    <property type="entry name" value="B64766"/>
</dbReference>
<dbReference type="RefSeq" id="NP_414912.1">
    <property type="nucleotide sequence ID" value="NC_000913.3"/>
</dbReference>
<dbReference type="RefSeq" id="WP_000092067.1">
    <property type="nucleotide sequence ID" value="NZ_SSZK01000009.1"/>
</dbReference>
<dbReference type="BioGRID" id="4261330">
    <property type="interactions" value="10"/>
</dbReference>
<dbReference type="DIP" id="DIP-11282N"/>
<dbReference type="FunCoup" id="P77562">
    <property type="interactions" value="67"/>
</dbReference>
<dbReference type="IntAct" id="P77562">
    <property type="interactions" value="1"/>
</dbReference>
<dbReference type="STRING" id="511145.b0378"/>
<dbReference type="PaxDb" id="511145-b0378"/>
<dbReference type="EnsemblBacteria" id="AAC73481">
    <property type="protein sequence ID" value="AAC73481"/>
    <property type="gene ID" value="b0378"/>
</dbReference>
<dbReference type="GeneID" id="945038"/>
<dbReference type="KEGG" id="ecj:JW0369"/>
<dbReference type="KEGG" id="eco:b0378"/>
<dbReference type="PATRIC" id="fig|1411691.4.peg.1900"/>
<dbReference type="EchoBASE" id="EB3375"/>
<dbReference type="eggNOG" id="ENOG502Z82H">
    <property type="taxonomic scope" value="Bacteria"/>
</dbReference>
<dbReference type="HOGENOM" id="CLU_048230_1_0_6"/>
<dbReference type="InParanoid" id="P77562"/>
<dbReference type="OMA" id="FIDMVPM"/>
<dbReference type="OrthoDB" id="596976at2"/>
<dbReference type="PhylomeDB" id="P77562"/>
<dbReference type="BioCyc" id="EcoCyc:G6227-MONOMER"/>
<dbReference type="PRO" id="PR:P77562"/>
<dbReference type="Proteomes" id="UP000000625">
    <property type="component" value="Chromosome"/>
</dbReference>
<dbReference type="GO" id="GO:0005829">
    <property type="term" value="C:cytosol"/>
    <property type="evidence" value="ECO:0000314"/>
    <property type="project" value="EcoCyc"/>
</dbReference>
<dbReference type="GO" id="GO:0031240">
    <property type="term" value="C:external side of cell outer membrane"/>
    <property type="evidence" value="ECO:0000314"/>
    <property type="project" value="EcoCyc"/>
</dbReference>
<dbReference type="GO" id="GO:1901652">
    <property type="term" value="P:response to peptide"/>
    <property type="evidence" value="ECO:0000315"/>
    <property type="project" value="EcoCyc"/>
</dbReference>
<dbReference type="InterPro" id="IPR011673">
    <property type="entry name" value="DUF1615"/>
</dbReference>
<dbReference type="Pfam" id="PF07759">
    <property type="entry name" value="DUF1615"/>
    <property type="match status" value="1"/>
</dbReference>
<dbReference type="PROSITE" id="PS51257">
    <property type="entry name" value="PROKAR_LIPOPROTEIN"/>
    <property type="match status" value="1"/>
</dbReference>
<sequence>MSRVNPLSSLSLLAVLVLAGCSSQAPQPLKKGEKAIDVASVVRQKMPASVKDRDAWAKDLATTFESQGLAPTLENVCSVLAVAQQESNYQADPAVPGLSKIAWQEIDRRAERMHIPAFLVHTALKIKSPNGKSYSERLDSVRTEKQLSAIFDDLINMVPMGQTLFGSLNPVRTGGPMQVSIAFAEQHTKGYPWKMDGTVRQEVFSRRGGLWFGTYHLLNYPASYSAPIYRFADFNAGWYASRNAAFQNAVSKASGVKLALDGDLIRYDSKEPGKTELATRKLAAKLGMSDSEIRRQLEKGDSFSFEETALYKKVYQLAETKTGKSLPREMLPGIQLESPKITRNLTTAWFAKRVDERRARCMKQ</sequence>